<dbReference type="EC" id="2.8.1.13" evidence="1"/>
<dbReference type="EMBL" id="CP000947">
    <property type="protein sequence ID" value="ACA31624.1"/>
    <property type="molecule type" value="Genomic_DNA"/>
</dbReference>
<dbReference type="RefSeq" id="WP_012340931.1">
    <property type="nucleotide sequence ID" value="NC_010519.1"/>
</dbReference>
<dbReference type="SMR" id="B0UWF2"/>
<dbReference type="STRING" id="228400.HSM_1837"/>
<dbReference type="GeneID" id="31488144"/>
<dbReference type="KEGG" id="hsm:HSM_1837"/>
<dbReference type="HOGENOM" id="CLU_035188_1_0_6"/>
<dbReference type="GO" id="GO:0005737">
    <property type="term" value="C:cytoplasm"/>
    <property type="evidence" value="ECO:0007669"/>
    <property type="project" value="UniProtKB-SubCell"/>
</dbReference>
<dbReference type="GO" id="GO:0005524">
    <property type="term" value="F:ATP binding"/>
    <property type="evidence" value="ECO:0007669"/>
    <property type="project" value="UniProtKB-KW"/>
</dbReference>
<dbReference type="GO" id="GO:0000049">
    <property type="term" value="F:tRNA binding"/>
    <property type="evidence" value="ECO:0007669"/>
    <property type="project" value="UniProtKB-KW"/>
</dbReference>
<dbReference type="GO" id="GO:0103016">
    <property type="term" value="F:tRNA-uridine 2-sulfurtransferase activity"/>
    <property type="evidence" value="ECO:0007669"/>
    <property type="project" value="UniProtKB-EC"/>
</dbReference>
<dbReference type="GO" id="GO:0002143">
    <property type="term" value="P:tRNA wobble position uridine thiolation"/>
    <property type="evidence" value="ECO:0007669"/>
    <property type="project" value="TreeGrafter"/>
</dbReference>
<dbReference type="CDD" id="cd01998">
    <property type="entry name" value="MnmA_TRMU-like"/>
    <property type="match status" value="1"/>
</dbReference>
<dbReference type="FunFam" id="2.30.30.280:FF:000001">
    <property type="entry name" value="tRNA-specific 2-thiouridylase MnmA"/>
    <property type="match status" value="1"/>
</dbReference>
<dbReference type="FunFam" id="2.40.30.10:FF:000023">
    <property type="entry name" value="tRNA-specific 2-thiouridylase MnmA"/>
    <property type="match status" value="1"/>
</dbReference>
<dbReference type="FunFam" id="3.40.50.620:FF:000004">
    <property type="entry name" value="tRNA-specific 2-thiouridylase MnmA"/>
    <property type="match status" value="1"/>
</dbReference>
<dbReference type="Gene3D" id="2.30.30.280">
    <property type="entry name" value="Adenine nucleotide alpha hydrolases-like domains"/>
    <property type="match status" value="1"/>
</dbReference>
<dbReference type="Gene3D" id="3.40.50.620">
    <property type="entry name" value="HUPs"/>
    <property type="match status" value="1"/>
</dbReference>
<dbReference type="Gene3D" id="2.40.30.10">
    <property type="entry name" value="Translation factors"/>
    <property type="match status" value="1"/>
</dbReference>
<dbReference type="HAMAP" id="MF_00144">
    <property type="entry name" value="tRNA_thiouridyl_MnmA"/>
    <property type="match status" value="1"/>
</dbReference>
<dbReference type="InterPro" id="IPR004506">
    <property type="entry name" value="MnmA-like"/>
</dbReference>
<dbReference type="InterPro" id="IPR046885">
    <property type="entry name" value="MnmA-like_C"/>
</dbReference>
<dbReference type="InterPro" id="IPR046884">
    <property type="entry name" value="MnmA-like_central"/>
</dbReference>
<dbReference type="InterPro" id="IPR023382">
    <property type="entry name" value="MnmA-like_central_sf"/>
</dbReference>
<dbReference type="InterPro" id="IPR014729">
    <property type="entry name" value="Rossmann-like_a/b/a_fold"/>
</dbReference>
<dbReference type="NCBIfam" id="NF001138">
    <property type="entry name" value="PRK00143.1"/>
    <property type="match status" value="1"/>
</dbReference>
<dbReference type="NCBIfam" id="TIGR00420">
    <property type="entry name" value="trmU"/>
    <property type="match status" value="1"/>
</dbReference>
<dbReference type="PANTHER" id="PTHR11933:SF5">
    <property type="entry name" value="MITOCHONDRIAL TRNA-SPECIFIC 2-THIOURIDYLASE 1"/>
    <property type="match status" value="1"/>
</dbReference>
<dbReference type="PANTHER" id="PTHR11933">
    <property type="entry name" value="TRNA 5-METHYLAMINOMETHYL-2-THIOURIDYLATE -METHYLTRANSFERASE"/>
    <property type="match status" value="1"/>
</dbReference>
<dbReference type="Pfam" id="PF03054">
    <property type="entry name" value="tRNA_Me_trans"/>
    <property type="match status" value="1"/>
</dbReference>
<dbReference type="Pfam" id="PF20258">
    <property type="entry name" value="tRNA_Me_trans_C"/>
    <property type="match status" value="1"/>
</dbReference>
<dbReference type="Pfam" id="PF20259">
    <property type="entry name" value="tRNA_Me_trans_M"/>
    <property type="match status" value="1"/>
</dbReference>
<dbReference type="SUPFAM" id="SSF52402">
    <property type="entry name" value="Adenine nucleotide alpha hydrolases-like"/>
    <property type="match status" value="1"/>
</dbReference>
<keyword id="KW-0067">ATP-binding</keyword>
<keyword id="KW-0963">Cytoplasm</keyword>
<keyword id="KW-1015">Disulfide bond</keyword>
<keyword id="KW-0547">Nucleotide-binding</keyword>
<keyword id="KW-0694">RNA-binding</keyword>
<keyword id="KW-0808">Transferase</keyword>
<keyword id="KW-0819">tRNA processing</keyword>
<keyword id="KW-0820">tRNA-binding</keyword>
<accession>B0UWF2</accession>
<protein>
    <recommendedName>
        <fullName evidence="1">tRNA-specific 2-thiouridylase MnmA</fullName>
        <ecNumber evidence="1">2.8.1.13</ecNumber>
    </recommendedName>
</protein>
<organism>
    <name type="scientific">Histophilus somni (strain 2336)</name>
    <name type="common">Haemophilus somnus</name>
    <dbReference type="NCBI Taxonomy" id="228400"/>
    <lineage>
        <taxon>Bacteria</taxon>
        <taxon>Pseudomonadati</taxon>
        <taxon>Pseudomonadota</taxon>
        <taxon>Gammaproteobacteria</taxon>
        <taxon>Pasteurellales</taxon>
        <taxon>Pasteurellaceae</taxon>
        <taxon>Histophilus</taxon>
    </lineage>
</organism>
<comment type="function">
    <text evidence="1">Catalyzes the 2-thiolation of uridine at the wobble position (U34) of tRNA, leading to the formation of s(2)U34.</text>
</comment>
<comment type="catalytic activity">
    <reaction evidence="1">
        <text>S-sulfanyl-L-cysteinyl-[protein] + uridine(34) in tRNA + AH2 + ATP = 2-thiouridine(34) in tRNA + L-cysteinyl-[protein] + A + AMP + diphosphate + H(+)</text>
        <dbReference type="Rhea" id="RHEA:47032"/>
        <dbReference type="Rhea" id="RHEA-COMP:10131"/>
        <dbReference type="Rhea" id="RHEA-COMP:11726"/>
        <dbReference type="Rhea" id="RHEA-COMP:11727"/>
        <dbReference type="Rhea" id="RHEA-COMP:11728"/>
        <dbReference type="ChEBI" id="CHEBI:13193"/>
        <dbReference type="ChEBI" id="CHEBI:15378"/>
        <dbReference type="ChEBI" id="CHEBI:17499"/>
        <dbReference type="ChEBI" id="CHEBI:29950"/>
        <dbReference type="ChEBI" id="CHEBI:30616"/>
        <dbReference type="ChEBI" id="CHEBI:33019"/>
        <dbReference type="ChEBI" id="CHEBI:61963"/>
        <dbReference type="ChEBI" id="CHEBI:65315"/>
        <dbReference type="ChEBI" id="CHEBI:87170"/>
        <dbReference type="ChEBI" id="CHEBI:456215"/>
        <dbReference type="EC" id="2.8.1.13"/>
    </reaction>
</comment>
<comment type="subcellular location">
    <subcellularLocation>
        <location evidence="1">Cytoplasm</location>
    </subcellularLocation>
</comment>
<comment type="similarity">
    <text evidence="1">Belongs to the MnmA/TRMU family.</text>
</comment>
<reference key="1">
    <citation type="submission" date="2008-02" db="EMBL/GenBank/DDBJ databases">
        <title>Complete sequence of Haemophilus somnus 2336.</title>
        <authorList>
            <consortium name="US DOE Joint Genome Institute"/>
            <person name="Siddaramappa S."/>
            <person name="Duncan A.J."/>
            <person name="Challacombe J.F."/>
            <person name="Rainey D."/>
            <person name="Gillaspy A.F."/>
            <person name="Carson M."/>
            <person name="Gipson J."/>
            <person name="Gipson M."/>
            <person name="Bruce D."/>
            <person name="Detter J.C."/>
            <person name="Han C.S."/>
            <person name="Land M."/>
            <person name="Tapia R."/>
            <person name="Thompson L.S."/>
            <person name="Orvis J."/>
            <person name="Zaitshik J."/>
            <person name="Barnes G."/>
            <person name="Brettin T.S."/>
            <person name="Dyer D.W."/>
            <person name="Inzana T.J."/>
        </authorList>
    </citation>
    <scope>NUCLEOTIDE SEQUENCE [LARGE SCALE GENOMIC DNA]</scope>
    <source>
        <strain>2336</strain>
    </source>
</reference>
<gene>
    <name evidence="1" type="primary">mnmA</name>
    <name type="ordered locus">HSM_1837</name>
</gene>
<sequence length="383" mass="42770">MKSIVYEKKLPKLTALEIAKNSKKKVICGMSGGVDSSVSAFILQQQGYQVEGLFMKNWEEDDDTDYCTAANDLADAQAVCDKLGIKLHKINFAAEYWDNVFEHFLAEYKAGRTPNPDILCNKEIKFKAFLEYAVEDLGADYIATGHYVRRSDVNGQTKLLRGLDSNKDQSYFLYTLSKDQVAQSLFPVGEIEKPIVRAIAGDLGLITAEKKDSTGICFIGERKFKDFLERFLPAQPGEIRMVDGKVIGKHDGLMYYTLGQRKGLGIGGVKGLSEDPFYVVDKDLINNVLVVAQGNDNSALLSQGLMATQLYWIDRLPIRQNLRCTVKTRYRQKDVACEVIPINDDCIEVRFDEPQIAVTPGQSAVFYQGEVCLGGGVIERQIK</sequence>
<evidence type="ECO:0000255" key="1">
    <source>
        <dbReference type="HAMAP-Rule" id="MF_00144"/>
    </source>
</evidence>
<name>MNMA_HISS2</name>
<proteinExistence type="inferred from homology"/>
<feature type="chain" id="PRO_0000349656" description="tRNA-specific 2-thiouridylase MnmA">
    <location>
        <begin position="1"/>
        <end position="383"/>
    </location>
</feature>
<feature type="region of interest" description="Interaction with target base in tRNA" evidence="1">
    <location>
        <begin position="115"/>
        <end position="117"/>
    </location>
</feature>
<feature type="region of interest" description="Interaction with tRNA" evidence="1">
    <location>
        <begin position="167"/>
        <end position="169"/>
    </location>
</feature>
<feature type="region of interest" description="Interaction with tRNA" evidence="1">
    <location>
        <begin position="329"/>
        <end position="330"/>
    </location>
</feature>
<feature type="active site" description="Nucleophile" evidence="1">
    <location>
        <position position="120"/>
    </location>
</feature>
<feature type="active site" description="Cysteine persulfide intermediate" evidence="1">
    <location>
        <position position="217"/>
    </location>
</feature>
<feature type="binding site" evidence="1">
    <location>
        <begin position="29"/>
        <end position="36"/>
    </location>
    <ligand>
        <name>ATP</name>
        <dbReference type="ChEBI" id="CHEBI:30616"/>
    </ligand>
</feature>
<feature type="binding site" evidence="1">
    <location>
        <position position="55"/>
    </location>
    <ligand>
        <name>ATP</name>
        <dbReference type="ChEBI" id="CHEBI:30616"/>
    </ligand>
</feature>
<feature type="binding site" evidence="1">
    <location>
        <position position="145"/>
    </location>
    <ligand>
        <name>ATP</name>
        <dbReference type="ChEBI" id="CHEBI:30616"/>
    </ligand>
</feature>
<feature type="site" description="Interaction with tRNA" evidence="1">
    <location>
        <position position="146"/>
    </location>
</feature>
<feature type="site" description="Interaction with tRNA" evidence="1">
    <location>
        <position position="362"/>
    </location>
</feature>
<feature type="disulfide bond" description="Alternate" evidence="1">
    <location>
        <begin position="120"/>
        <end position="217"/>
    </location>
</feature>